<organism>
    <name type="scientific">Sus scrofa</name>
    <name type="common">Pig</name>
    <dbReference type="NCBI Taxonomy" id="9823"/>
    <lineage>
        <taxon>Eukaryota</taxon>
        <taxon>Metazoa</taxon>
        <taxon>Chordata</taxon>
        <taxon>Craniata</taxon>
        <taxon>Vertebrata</taxon>
        <taxon>Euteleostomi</taxon>
        <taxon>Mammalia</taxon>
        <taxon>Eutheria</taxon>
        <taxon>Laurasiatheria</taxon>
        <taxon>Artiodactyla</taxon>
        <taxon>Suina</taxon>
        <taxon>Suidae</taxon>
        <taxon>Sus</taxon>
    </lineage>
</organism>
<keyword id="KW-1015">Disulfide bond</keyword>
<keyword id="KW-0325">Glycoprotein</keyword>
<keyword id="KW-0339">Growth factor</keyword>
<keyword id="KW-0479">Metal-binding</keyword>
<keyword id="KW-0481">Metalloenzyme inhibitor</keyword>
<keyword id="KW-0483">Metalloprotease inhibitor</keyword>
<keyword id="KW-0597">Phosphoprotein</keyword>
<keyword id="KW-0646">Protease inhibitor</keyword>
<keyword id="KW-1185">Reference proteome</keyword>
<keyword id="KW-0964">Secreted</keyword>
<keyword id="KW-0732">Signal</keyword>
<keyword id="KW-0862">Zinc</keyword>
<feature type="signal peptide" evidence="1">
    <location>
        <begin position="1"/>
        <end position="23"/>
    </location>
</feature>
<feature type="chain" id="PRO_0000034327" description="Metalloproteinase inhibitor 1">
    <location>
        <begin position="24"/>
        <end position="207"/>
    </location>
</feature>
<feature type="domain" description="NTR" evidence="5">
    <location>
        <begin position="24"/>
        <end position="147"/>
    </location>
</feature>
<feature type="region of interest" description="Involved in metalloproteinase-binding" evidence="3">
    <location>
        <begin position="24"/>
        <end position="27"/>
    </location>
</feature>
<feature type="region of interest" description="Involved in metalloproteinase-binding" evidence="3">
    <location>
        <begin position="90"/>
        <end position="91"/>
    </location>
</feature>
<feature type="binding site" evidence="3">
    <location>
        <position position="24"/>
    </location>
    <ligand>
        <name>Zn(2+)</name>
        <dbReference type="ChEBI" id="CHEBI:29105"/>
        <note>ligand shared with metalloproteinase partner</note>
    </ligand>
</feature>
<feature type="modified residue" description="Phosphoserine" evidence="2">
    <location>
        <position position="178"/>
    </location>
</feature>
<feature type="glycosylation site" description="N-linked (GlcNAc...) asparagine" evidence="4">
    <location>
        <position position="53"/>
    </location>
</feature>
<feature type="glycosylation site" description="N-linked (GlcNAc...) asparagine" evidence="4">
    <location>
        <position position="101"/>
    </location>
</feature>
<feature type="disulfide bond" evidence="5">
    <location>
        <begin position="24"/>
        <end position="93"/>
    </location>
</feature>
<feature type="disulfide bond" evidence="5">
    <location>
        <begin position="26"/>
        <end position="122"/>
    </location>
</feature>
<feature type="disulfide bond" evidence="5">
    <location>
        <begin position="36"/>
        <end position="147"/>
    </location>
</feature>
<feature type="disulfide bond" evidence="5">
    <location>
        <begin position="150"/>
        <end position="197"/>
    </location>
</feature>
<feature type="disulfide bond" evidence="5">
    <location>
        <begin position="155"/>
        <end position="160"/>
    </location>
</feature>
<feature type="disulfide bond" evidence="5">
    <location>
        <begin position="168"/>
        <end position="189"/>
    </location>
</feature>
<feature type="sequence conflict" description="In Ref. 2; AAF24348." evidence="7" ref="2">
    <original>A</original>
    <variation>P</variation>
    <location>
        <position position="34"/>
    </location>
</feature>
<feature type="sequence conflict" description="In Ref. 3; AAF17354." evidence="7" ref="3">
    <original>S</original>
    <variation>N</variation>
    <location>
        <position position="37"/>
    </location>
</feature>
<feature type="sequence conflict" description="In Ref. 2; AAF24348." evidence="7" ref="2">
    <original>V</original>
    <variation>F</variation>
    <location>
        <position position="41"/>
    </location>
</feature>
<feature type="sequence conflict" description="In Ref. 1; AAB21865." evidence="7" ref="1">
    <original>K</original>
    <variation>Q</variation>
    <location>
        <position position="59"/>
    </location>
</feature>
<feature type="sequence conflict" description="In Ref. 3; AAF17354." evidence="7" ref="3">
    <original>T</original>
    <variation>A</variation>
    <location>
        <position position="86"/>
    </location>
</feature>
<feature type="sequence conflict" description="In Ref. 3." evidence="7" ref="3">
    <original>EI</original>
    <variation>KT</variation>
    <location>
        <begin position="141"/>
        <end position="142"/>
    </location>
</feature>
<protein>
    <recommendedName>
        <fullName>Metalloproteinase inhibitor 1</fullName>
    </recommendedName>
    <alternativeName>
        <fullName>Tissue inhibitor of metalloproteinases 1</fullName>
        <shortName>TIMP-1</shortName>
    </alternativeName>
</protein>
<proteinExistence type="evidence at transcript level"/>
<dbReference type="EMBL" id="S96211">
    <property type="protein sequence ID" value="AAB21865.1"/>
    <property type="molecule type" value="mRNA"/>
</dbReference>
<dbReference type="EMBL" id="AF201726">
    <property type="protein sequence ID" value="AAF24348.1"/>
    <property type="molecule type" value="mRNA"/>
</dbReference>
<dbReference type="EMBL" id="AF156029">
    <property type="protein sequence ID" value="AAF17354.1"/>
    <property type="molecule type" value="mRNA"/>
</dbReference>
<dbReference type="PIR" id="I47061">
    <property type="entry name" value="I47061"/>
</dbReference>
<dbReference type="RefSeq" id="NP_999022.1">
    <property type="nucleotide sequence ID" value="NM_213857.1"/>
</dbReference>
<dbReference type="SMR" id="P35624"/>
<dbReference type="FunCoup" id="P35624">
    <property type="interactions" value="285"/>
</dbReference>
<dbReference type="STRING" id="9823.ENSSSCP00000013066"/>
<dbReference type="GlyCosmos" id="P35624">
    <property type="glycosylation" value="2 sites, No reported glycans"/>
</dbReference>
<dbReference type="GlyGen" id="P35624">
    <property type="glycosylation" value="2 sites"/>
</dbReference>
<dbReference type="PaxDb" id="9823-ENSSSCP00000013066"/>
<dbReference type="PeptideAtlas" id="P35624"/>
<dbReference type="GeneID" id="396862"/>
<dbReference type="KEGG" id="ssc:396862"/>
<dbReference type="CTD" id="7076"/>
<dbReference type="eggNOG" id="KOG4745">
    <property type="taxonomic scope" value="Eukaryota"/>
</dbReference>
<dbReference type="InParanoid" id="P35624"/>
<dbReference type="OrthoDB" id="6041373at2759"/>
<dbReference type="Proteomes" id="UP000008227">
    <property type="component" value="Unplaced"/>
</dbReference>
<dbReference type="Proteomes" id="UP000314985">
    <property type="component" value="Unplaced"/>
</dbReference>
<dbReference type="Proteomes" id="UP000694570">
    <property type="component" value="Unplaced"/>
</dbReference>
<dbReference type="Proteomes" id="UP000694571">
    <property type="component" value="Unplaced"/>
</dbReference>
<dbReference type="Proteomes" id="UP000694720">
    <property type="component" value="Unplaced"/>
</dbReference>
<dbReference type="Proteomes" id="UP000694722">
    <property type="component" value="Unplaced"/>
</dbReference>
<dbReference type="Proteomes" id="UP000694723">
    <property type="component" value="Unplaced"/>
</dbReference>
<dbReference type="Proteomes" id="UP000694724">
    <property type="component" value="Unplaced"/>
</dbReference>
<dbReference type="Proteomes" id="UP000694725">
    <property type="component" value="Unplaced"/>
</dbReference>
<dbReference type="Proteomes" id="UP000694726">
    <property type="component" value="Unplaced"/>
</dbReference>
<dbReference type="Proteomes" id="UP000694727">
    <property type="component" value="Unplaced"/>
</dbReference>
<dbReference type="Proteomes" id="UP000694728">
    <property type="component" value="Unplaced"/>
</dbReference>
<dbReference type="GO" id="GO:0031012">
    <property type="term" value="C:extracellular matrix"/>
    <property type="evidence" value="ECO:0000318"/>
    <property type="project" value="GO_Central"/>
</dbReference>
<dbReference type="GO" id="GO:0005615">
    <property type="term" value="C:extracellular space"/>
    <property type="evidence" value="ECO:0000250"/>
    <property type="project" value="UniProtKB"/>
</dbReference>
<dbReference type="GO" id="GO:0005125">
    <property type="term" value="F:cytokine activity"/>
    <property type="evidence" value="ECO:0000250"/>
    <property type="project" value="UniProtKB"/>
</dbReference>
<dbReference type="GO" id="GO:0008083">
    <property type="term" value="F:growth factor activity"/>
    <property type="evidence" value="ECO:0007669"/>
    <property type="project" value="UniProtKB-KW"/>
</dbReference>
<dbReference type="GO" id="GO:0046872">
    <property type="term" value="F:metal ion binding"/>
    <property type="evidence" value="ECO:0007669"/>
    <property type="project" value="UniProtKB-KW"/>
</dbReference>
<dbReference type="GO" id="GO:0008191">
    <property type="term" value="F:metalloendopeptidase inhibitor activity"/>
    <property type="evidence" value="ECO:0000250"/>
    <property type="project" value="UniProtKB"/>
</dbReference>
<dbReference type="GO" id="GO:0071492">
    <property type="term" value="P:cellular response to UV-A"/>
    <property type="evidence" value="ECO:0000250"/>
    <property type="project" value="UniProtKB"/>
</dbReference>
<dbReference type="GO" id="GO:0043086">
    <property type="term" value="P:negative regulation of catalytic activity"/>
    <property type="evidence" value="ECO:0000250"/>
    <property type="project" value="UniProtKB"/>
</dbReference>
<dbReference type="GO" id="GO:0010951">
    <property type="term" value="P:negative regulation of endopeptidase activity"/>
    <property type="evidence" value="ECO:0000250"/>
    <property type="project" value="UniProtKB"/>
</dbReference>
<dbReference type="GO" id="GO:0051045">
    <property type="term" value="P:negative regulation of membrane protein ectodomain proteolysis"/>
    <property type="evidence" value="ECO:0000318"/>
    <property type="project" value="GO_Central"/>
</dbReference>
<dbReference type="GO" id="GO:0008284">
    <property type="term" value="P:positive regulation of cell population proliferation"/>
    <property type="evidence" value="ECO:0000250"/>
    <property type="project" value="UniProtKB"/>
</dbReference>
<dbReference type="GO" id="GO:2001044">
    <property type="term" value="P:regulation of integrin-mediated signaling pathway"/>
    <property type="evidence" value="ECO:0000250"/>
    <property type="project" value="UniProtKB"/>
</dbReference>
<dbReference type="GO" id="GO:0034097">
    <property type="term" value="P:response to cytokine"/>
    <property type="evidence" value="ECO:0000318"/>
    <property type="project" value="GO_Central"/>
</dbReference>
<dbReference type="GO" id="GO:0009725">
    <property type="term" value="P:response to hormone"/>
    <property type="evidence" value="ECO:0000318"/>
    <property type="project" value="GO_Central"/>
</dbReference>
<dbReference type="FunFam" id="2.40.50.120:FF:000016">
    <property type="entry name" value="Metalloproteinase inhibitor 1"/>
    <property type="match status" value="1"/>
</dbReference>
<dbReference type="FunFam" id="3.90.370.10:FF:000001">
    <property type="entry name" value="Metalloproteinase inhibitor 3"/>
    <property type="match status" value="1"/>
</dbReference>
<dbReference type="Gene3D" id="2.40.50.120">
    <property type="match status" value="1"/>
</dbReference>
<dbReference type="Gene3D" id="3.90.370.10">
    <property type="entry name" value="Tissue inhibitor of metalloproteinase-1. Chain B, domain 1"/>
    <property type="match status" value="1"/>
</dbReference>
<dbReference type="InterPro" id="IPR001134">
    <property type="entry name" value="Netrin_domain"/>
</dbReference>
<dbReference type="InterPro" id="IPR001820">
    <property type="entry name" value="TIMP"/>
</dbReference>
<dbReference type="InterPro" id="IPR008993">
    <property type="entry name" value="TIMP-like_OB-fold"/>
</dbReference>
<dbReference type="InterPro" id="IPR027465">
    <property type="entry name" value="TIMP_C"/>
</dbReference>
<dbReference type="InterPro" id="IPR030490">
    <property type="entry name" value="TIMP_CS"/>
</dbReference>
<dbReference type="PANTHER" id="PTHR11844">
    <property type="entry name" value="METALLOPROTEASE INHIBITOR"/>
    <property type="match status" value="1"/>
</dbReference>
<dbReference type="PANTHER" id="PTHR11844:SF20">
    <property type="entry name" value="METALLOPROTEINASE INHIBITOR 1"/>
    <property type="match status" value="1"/>
</dbReference>
<dbReference type="Pfam" id="PF00965">
    <property type="entry name" value="TIMP"/>
    <property type="match status" value="1"/>
</dbReference>
<dbReference type="SMART" id="SM00206">
    <property type="entry name" value="NTR"/>
    <property type="match status" value="1"/>
</dbReference>
<dbReference type="SUPFAM" id="SSF50242">
    <property type="entry name" value="TIMP-like"/>
    <property type="match status" value="1"/>
</dbReference>
<dbReference type="PROSITE" id="PS50189">
    <property type="entry name" value="NTR"/>
    <property type="match status" value="1"/>
</dbReference>
<dbReference type="PROSITE" id="PS00288">
    <property type="entry name" value="TIMP"/>
    <property type="match status" value="1"/>
</dbReference>
<comment type="function">
    <text evidence="1">Metalloproteinase inhibitor that functions by forming one to one complexes with target metalloproteinases, such as collagenases, and irreversibly inactivates them by binding to their catalytic zinc cofactor. Acts on MMP1, MMP2, MMP3, MMP7, MMP8, MMP9, MMP10, MMP11, MMP12, MMP13 and MMP16. Does not act on MMP14. Also functions as a growth factor that regulates cell differentiation, migration and cell death and activates cellular signaling cascades via CD63 and ITGB1. Plays a role in integrin signaling (By similarity).</text>
</comment>
<comment type="subunit">
    <text evidence="1">Interacts with MMP1, MMP3, MMP10 and MMP13, but has only very low affinity for MMP14. Interacts with CD63; identified in a complex with CD63 and ITGB1 (By similarity).</text>
</comment>
<comment type="subcellular location">
    <subcellularLocation>
        <location evidence="6">Secreted</location>
    </subcellularLocation>
</comment>
<comment type="PTM">
    <text evidence="1">The activity of TIMP1 is dependent on the presence of disulfide bonds.</text>
</comment>
<comment type="PTM">
    <text evidence="1">N-glycosylated.</text>
</comment>
<comment type="similarity">
    <text evidence="7">Belongs to the protease inhibitor I35 (TIMP) family.</text>
</comment>
<accession>P35624</accession>
<accession>Q9TT83</accession>
<accession>Q9TTB9</accession>
<name>TIMP1_PIG</name>
<reference key="1">
    <citation type="journal article" date="1992" name="Mol. Cell. Endocrinol.">
        <title>Differential screening of ovarian cDNA libraries detected the expression of the porcine collagenase inhibitor gene in functional corpora lutea.</title>
        <authorList>
            <person name="Tanaka T."/>
            <person name="Andoh N."/>
            <person name="Takeya T."/>
            <person name="Sato E."/>
        </authorList>
    </citation>
    <scope>NUCLEOTIDE SEQUENCE [MRNA]</scope>
    <scope>SUBCELLULAR LOCATION</scope>
    <source>
        <tissue>Ovary</tissue>
    </source>
</reference>
<reference key="2">
    <citation type="submission" date="1999-11" db="EMBL/GenBank/DDBJ databases">
        <title>Gene expression level of mmp3 and Timp1 in intervertebral disc.</title>
        <authorList>
            <person name="Wang J.Y."/>
            <person name="Baer A.E."/>
            <person name="Kraus V.B."/>
            <person name="Setton L.A."/>
        </authorList>
    </citation>
    <scope>NUCLEOTIDE SEQUENCE [MRNA] OF 34-195</scope>
</reference>
<reference key="3">
    <citation type="submission" date="1999-06" db="EMBL/GenBank/DDBJ databases">
        <title>Cloning and sequencing of porcine TIMPs.</title>
        <authorList>
            <person name="Wang J.F."/>
            <person name="Boykiw R.H."/>
            <person name="Reno C.R."/>
            <person name="Hart D.A."/>
            <person name="Olson M.E."/>
        </authorList>
    </citation>
    <scope>NUCLEOTIDE SEQUENCE [MRNA] OF 37-144</scope>
    <source>
        <tissue>Skin</tissue>
    </source>
</reference>
<sequence>MSPFAPLASGILLLLWLTAPSRACTCVPPHPQTAFCSSDLVIRAKFVGAPEFNQTASYKRYEIKMTKMFKGFNALGDAPDIRFIYTPAMESVCGYFHRSQNRSQEFLIAGQLWNGHLHITTCSFVAPWNSLSSAQRQGFTEIYAAGCEECTVFPCTSIPCKLQSDTHCLWTDQLLTGSDKGFQSRHLACMPREPGMCTWQSLRPRVA</sequence>
<evidence type="ECO:0000250" key="1"/>
<evidence type="ECO:0000250" key="2">
    <source>
        <dbReference type="UniProtKB" id="P01033"/>
    </source>
</evidence>
<evidence type="ECO:0000250" key="3">
    <source>
        <dbReference type="UniProtKB" id="P16035"/>
    </source>
</evidence>
<evidence type="ECO:0000255" key="4"/>
<evidence type="ECO:0000255" key="5">
    <source>
        <dbReference type="PROSITE-ProRule" id="PRU00295"/>
    </source>
</evidence>
<evidence type="ECO:0000269" key="6">
    <source>
    </source>
</evidence>
<evidence type="ECO:0000305" key="7"/>
<gene>
    <name type="primary">TIMP1</name>
</gene>